<reference key="1">
    <citation type="journal article" date="2006" name="Genome Res.">
        <title>Skewed genomic variability in strains of the toxigenic bacterial pathogen, Clostridium perfringens.</title>
        <authorList>
            <person name="Myers G.S.A."/>
            <person name="Rasko D.A."/>
            <person name="Cheung J.K."/>
            <person name="Ravel J."/>
            <person name="Seshadri R."/>
            <person name="DeBoy R.T."/>
            <person name="Ren Q."/>
            <person name="Varga J."/>
            <person name="Awad M.M."/>
            <person name="Brinkac L.M."/>
            <person name="Daugherty S.C."/>
            <person name="Haft D.H."/>
            <person name="Dodson R.J."/>
            <person name="Madupu R."/>
            <person name="Nelson W.C."/>
            <person name="Rosovitz M.J."/>
            <person name="Sullivan S.A."/>
            <person name="Khouri H."/>
            <person name="Dimitrov G.I."/>
            <person name="Watkins K.L."/>
            <person name="Mulligan S."/>
            <person name="Benton J."/>
            <person name="Radune D."/>
            <person name="Fisher D.J."/>
            <person name="Atkins H.S."/>
            <person name="Hiscox T."/>
            <person name="Jost B.H."/>
            <person name="Billington S.J."/>
            <person name="Songer J.G."/>
            <person name="McClane B.A."/>
            <person name="Titball R.W."/>
            <person name="Rood J.I."/>
            <person name="Melville S.B."/>
            <person name="Paulsen I.T."/>
        </authorList>
    </citation>
    <scope>NUCLEOTIDE SEQUENCE [LARGE SCALE GENOMIC DNA]</scope>
    <source>
        <strain>ATCC 13124 / DSM 756 / JCM 1290 / NCIMB 6125 / NCTC 8237 / S 107 / Type A</strain>
    </source>
</reference>
<sequence length="192" mass="21111">MKNTDAMVIDTLKEVGALLEGHFLLSSGRHSNRYCQCAQLLKYPEKAEKVLKVVADQLKDIDFDLVVGPAMGGVIVAYELGRQLGKPAIFTERENGEMTLRRGFTIEKGQKVVITEDVVTTGKSFKEAAKVIEEQGGEVVAVVCIVDRTPGNVTDFPMYSSIKLDIESFEAENCPLCKEGVPYIKPGSRNIK</sequence>
<gene>
    <name evidence="1" type="primary">pyrE</name>
    <name type="ordered locus">CPF_1381</name>
</gene>
<keyword id="KW-0328">Glycosyltransferase</keyword>
<keyword id="KW-0460">Magnesium</keyword>
<keyword id="KW-0665">Pyrimidine biosynthesis</keyword>
<keyword id="KW-0808">Transferase</keyword>
<name>PYRE_CLOP1</name>
<organism>
    <name type="scientific">Clostridium perfringens (strain ATCC 13124 / DSM 756 / JCM 1290 / NCIMB 6125 / NCTC 8237 / Type A)</name>
    <dbReference type="NCBI Taxonomy" id="195103"/>
    <lineage>
        <taxon>Bacteria</taxon>
        <taxon>Bacillati</taxon>
        <taxon>Bacillota</taxon>
        <taxon>Clostridia</taxon>
        <taxon>Eubacteriales</taxon>
        <taxon>Clostridiaceae</taxon>
        <taxon>Clostridium</taxon>
    </lineage>
</organism>
<comment type="function">
    <text evidence="1">Catalyzes the transfer of a ribosyl phosphate group from 5-phosphoribose 1-diphosphate to orotate, leading to the formation of orotidine monophosphate (OMP).</text>
</comment>
<comment type="catalytic activity">
    <reaction evidence="1">
        <text>orotidine 5'-phosphate + diphosphate = orotate + 5-phospho-alpha-D-ribose 1-diphosphate</text>
        <dbReference type="Rhea" id="RHEA:10380"/>
        <dbReference type="ChEBI" id="CHEBI:30839"/>
        <dbReference type="ChEBI" id="CHEBI:33019"/>
        <dbReference type="ChEBI" id="CHEBI:57538"/>
        <dbReference type="ChEBI" id="CHEBI:58017"/>
        <dbReference type="EC" id="2.4.2.10"/>
    </reaction>
</comment>
<comment type="cofactor">
    <cofactor evidence="1">
        <name>Mg(2+)</name>
        <dbReference type="ChEBI" id="CHEBI:18420"/>
    </cofactor>
</comment>
<comment type="pathway">
    <text evidence="1">Pyrimidine metabolism; UMP biosynthesis via de novo pathway; UMP from orotate: step 1/2.</text>
</comment>
<comment type="subunit">
    <text evidence="1">Homodimer.</text>
</comment>
<comment type="similarity">
    <text evidence="1">Belongs to the purine/pyrimidine phosphoribosyltransferase family. PyrE subfamily.</text>
</comment>
<feature type="chain" id="PRO_1000066221" description="Orotate phosphoribosyltransferase">
    <location>
        <begin position="1"/>
        <end position="192"/>
    </location>
</feature>
<feature type="binding site" evidence="1">
    <location>
        <begin position="116"/>
        <end position="124"/>
    </location>
    <ligand>
        <name>5-phospho-alpha-D-ribose 1-diphosphate</name>
        <dbReference type="ChEBI" id="CHEBI:58017"/>
    </ligand>
</feature>
<feature type="binding site" evidence="1">
    <location>
        <position position="120"/>
    </location>
    <ligand>
        <name>orotate</name>
        <dbReference type="ChEBI" id="CHEBI:30839"/>
    </ligand>
</feature>
<feature type="binding site" evidence="1">
    <location>
        <position position="148"/>
    </location>
    <ligand>
        <name>orotate</name>
        <dbReference type="ChEBI" id="CHEBI:30839"/>
    </ligand>
</feature>
<dbReference type="EC" id="2.4.2.10" evidence="1"/>
<dbReference type="EMBL" id="CP000246">
    <property type="protein sequence ID" value="ABG84900.1"/>
    <property type="molecule type" value="Genomic_DNA"/>
</dbReference>
<dbReference type="RefSeq" id="WP_003456665.1">
    <property type="nucleotide sequence ID" value="NC_008261.1"/>
</dbReference>
<dbReference type="SMR" id="Q0TRB3"/>
<dbReference type="STRING" id="195103.CPF_1381"/>
<dbReference type="PaxDb" id="195103-CPF_1381"/>
<dbReference type="GeneID" id="93002302"/>
<dbReference type="KEGG" id="cpf:CPF_1381"/>
<dbReference type="eggNOG" id="COG0461">
    <property type="taxonomic scope" value="Bacteria"/>
</dbReference>
<dbReference type="HOGENOM" id="CLU_074878_3_0_9"/>
<dbReference type="UniPathway" id="UPA00070">
    <property type="reaction ID" value="UER00119"/>
</dbReference>
<dbReference type="Proteomes" id="UP000001823">
    <property type="component" value="Chromosome"/>
</dbReference>
<dbReference type="GO" id="GO:0000287">
    <property type="term" value="F:magnesium ion binding"/>
    <property type="evidence" value="ECO:0007669"/>
    <property type="project" value="UniProtKB-UniRule"/>
</dbReference>
<dbReference type="GO" id="GO:0004588">
    <property type="term" value="F:orotate phosphoribosyltransferase activity"/>
    <property type="evidence" value="ECO:0007669"/>
    <property type="project" value="UniProtKB-UniRule"/>
</dbReference>
<dbReference type="GO" id="GO:0044205">
    <property type="term" value="P:'de novo' UMP biosynthetic process"/>
    <property type="evidence" value="ECO:0007669"/>
    <property type="project" value="UniProtKB-UniRule"/>
</dbReference>
<dbReference type="GO" id="GO:0019856">
    <property type="term" value="P:pyrimidine nucleobase biosynthetic process"/>
    <property type="evidence" value="ECO:0007669"/>
    <property type="project" value="InterPro"/>
</dbReference>
<dbReference type="CDD" id="cd06223">
    <property type="entry name" value="PRTases_typeI"/>
    <property type="match status" value="1"/>
</dbReference>
<dbReference type="Gene3D" id="3.40.50.2020">
    <property type="match status" value="1"/>
</dbReference>
<dbReference type="HAMAP" id="MF_01208">
    <property type="entry name" value="PyrE"/>
    <property type="match status" value="1"/>
</dbReference>
<dbReference type="InterPro" id="IPR023031">
    <property type="entry name" value="OPRT"/>
</dbReference>
<dbReference type="InterPro" id="IPR006273">
    <property type="entry name" value="Orotate_PRibTrfase_bac"/>
</dbReference>
<dbReference type="InterPro" id="IPR000836">
    <property type="entry name" value="PRibTrfase_dom"/>
</dbReference>
<dbReference type="InterPro" id="IPR029057">
    <property type="entry name" value="PRTase-like"/>
</dbReference>
<dbReference type="NCBIfam" id="TIGR01367">
    <property type="entry name" value="pyrE_Therm"/>
    <property type="match status" value="1"/>
</dbReference>
<dbReference type="PANTHER" id="PTHR19278">
    <property type="entry name" value="OROTATE PHOSPHORIBOSYLTRANSFERASE"/>
    <property type="match status" value="1"/>
</dbReference>
<dbReference type="PANTHER" id="PTHR19278:SF9">
    <property type="entry name" value="URIDINE 5'-MONOPHOSPHATE SYNTHASE"/>
    <property type="match status" value="1"/>
</dbReference>
<dbReference type="Pfam" id="PF00156">
    <property type="entry name" value="Pribosyltran"/>
    <property type="match status" value="1"/>
</dbReference>
<dbReference type="SUPFAM" id="SSF53271">
    <property type="entry name" value="PRTase-like"/>
    <property type="match status" value="1"/>
</dbReference>
<accession>Q0TRB3</accession>
<proteinExistence type="inferred from homology"/>
<protein>
    <recommendedName>
        <fullName evidence="1">Orotate phosphoribosyltransferase</fullName>
        <shortName evidence="1">OPRT</shortName>
        <shortName evidence="1">OPRTase</shortName>
        <ecNumber evidence="1">2.4.2.10</ecNumber>
    </recommendedName>
</protein>
<evidence type="ECO:0000255" key="1">
    <source>
        <dbReference type="HAMAP-Rule" id="MF_01208"/>
    </source>
</evidence>